<feature type="chain" id="PRO_0000172560" description="Phosphatidylglycerol--prolipoprotein diacylglyceryl transferase">
    <location>
        <begin position="1"/>
        <end position="352"/>
    </location>
</feature>
<feature type="transmembrane region" description="Helical" evidence="1">
    <location>
        <begin position="20"/>
        <end position="40"/>
    </location>
</feature>
<feature type="transmembrane region" description="Helical" evidence="1">
    <location>
        <begin position="55"/>
        <end position="75"/>
    </location>
</feature>
<feature type="transmembrane region" description="Helical" evidence="1">
    <location>
        <begin position="97"/>
        <end position="117"/>
    </location>
</feature>
<feature type="transmembrane region" description="Helical" evidence="1">
    <location>
        <begin position="122"/>
        <end position="142"/>
    </location>
</feature>
<feature type="transmembrane region" description="Helical" evidence="1">
    <location>
        <begin position="248"/>
        <end position="268"/>
    </location>
</feature>
<feature type="transmembrane region" description="Helical" evidence="1">
    <location>
        <begin position="275"/>
        <end position="295"/>
    </location>
</feature>
<feature type="transmembrane region" description="Helical" evidence="1">
    <location>
        <begin position="314"/>
        <end position="334"/>
    </location>
</feature>
<feature type="binding site" evidence="1">
    <location>
        <position position="143"/>
    </location>
    <ligand>
        <name>a 1,2-diacyl-sn-glycero-3-phospho-(1'-sn-glycerol)</name>
        <dbReference type="ChEBI" id="CHEBI:64716"/>
    </ligand>
</feature>
<keyword id="KW-0997">Cell inner membrane</keyword>
<keyword id="KW-1003">Cell membrane</keyword>
<keyword id="KW-0472">Membrane</keyword>
<keyword id="KW-1185">Reference proteome</keyword>
<keyword id="KW-0808">Transferase</keyword>
<keyword id="KW-0812">Transmembrane</keyword>
<keyword id="KW-1133">Transmembrane helix</keyword>
<reference key="1">
    <citation type="journal article" date="2004" name="Science">
        <title>A predator unmasked: life cycle of Bdellovibrio bacteriovorus from a genomic perspective.</title>
        <authorList>
            <person name="Rendulic S."/>
            <person name="Jagtap P."/>
            <person name="Rosinus A."/>
            <person name="Eppinger M."/>
            <person name="Baar C."/>
            <person name="Lanz C."/>
            <person name="Keller H."/>
            <person name="Lambert C."/>
            <person name="Evans K.J."/>
            <person name="Goesmann A."/>
            <person name="Meyer F."/>
            <person name="Sockett R.E."/>
            <person name="Schuster S.C."/>
        </authorList>
    </citation>
    <scope>NUCLEOTIDE SEQUENCE [LARGE SCALE GENOMIC DNA]</scope>
    <source>
        <strain>ATCC 15356 / DSM 50701 / NCIMB 9529 / HD100</strain>
    </source>
</reference>
<proteinExistence type="inferred from homology"/>
<gene>
    <name evidence="1" type="primary">lgt</name>
    <name type="ordered locus">Bd1105</name>
</gene>
<evidence type="ECO:0000255" key="1">
    <source>
        <dbReference type="HAMAP-Rule" id="MF_01147"/>
    </source>
</evidence>
<sequence length="352" mass="39352">MVHDFDPFALRISGDFGIRWYGLSYMMGFICAYILITWLAKRQRAGLSVQMVGDFITYAAIGTLVGGRLGYVLFYGPDLFLKFKSEFPYWGVLAVNEGGMASHGGIIGIVIACLLYARKYSVNSLYLLDLVAVTGPIGVFFGRIANFINGELVGRPCDPTYPLAVKFPQDIVSWPGQEAAKLTELVPVVEKVGVGREQWLELVDKFRFDMAAREQLYATLNKVIESIQDGNTAAKEAIAPLLTPRYPSQLFAAFGEGLLIFMFLFFLWRKPRKPGFIAACFVLIYAVVRVVDEHFRMPDAHIGFQALGLTRGQWLSLAMFVVGLILMVVWTRAASLKIPGWQRGHSIKLNRK</sequence>
<comment type="function">
    <text evidence="1">Catalyzes the transfer of the diacylglyceryl group from phosphatidylglycerol to the sulfhydryl group of the N-terminal cysteine of a prolipoprotein, the first step in the formation of mature lipoproteins.</text>
</comment>
<comment type="catalytic activity">
    <reaction evidence="1">
        <text>L-cysteinyl-[prolipoprotein] + a 1,2-diacyl-sn-glycero-3-phospho-(1'-sn-glycerol) = an S-1,2-diacyl-sn-glyceryl-L-cysteinyl-[prolipoprotein] + sn-glycerol 1-phosphate + H(+)</text>
        <dbReference type="Rhea" id="RHEA:56712"/>
        <dbReference type="Rhea" id="RHEA-COMP:14679"/>
        <dbReference type="Rhea" id="RHEA-COMP:14680"/>
        <dbReference type="ChEBI" id="CHEBI:15378"/>
        <dbReference type="ChEBI" id="CHEBI:29950"/>
        <dbReference type="ChEBI" id="CHEBI:57685"/>
        <dbReference type="ChEBI" id="CHEBI:64716"/>
        <dbReference type="ChEBI" id="CHEBI:140658"/>
        <dbReference type="EC" id="2.5.1.145"/>
    </reaction>
</comment>
<comment type="pathway">
    <text evidence="1">Protein modification; lipoprotein biosynthesis (diacylglyceryl transfer).</text>
</comment>
<comment type="subcellular location">
    <subcellularLocation>
        <location evidence="1">Cell inner membrane</location>
        <topology evidence="1">Multi-pass membrane protein</topology>
    </subcellularLocation>
</comment>
<comment type="similarity">
    <text evidence="1">Belongs to the Lgt family.</text>
</comment>
<accession>P60967</accession>
<name>LGT_BDEBA</name>
<dbReference type="EC" id="2.5.1.145" evidence="1"/>
<dbReference type="EMBL" id="BX842648">
    <property type="protein sequence ID" value="CAE79026.1"/>
    <property type="molecule type" value="Genomic_DNA"/>
</dbReference>
<dbReference type="RefSeq" id="WP_011163629.1">
    <property type="nucleotide sequence ID" value="NC_005363.1"/>
</dbReference>
<dbReference type="SMR" id="P60967"/>
<dbReference type="STRING" id="264462.Bd1105"/>
<dbReference type="GeneID" id="93012157"/>
<dbReference type="KEGG" id="bba:Bd1105"/>
<dbReference type="eggNOG" id="COG0682">
    <property type="taxonomic scope" value="Bacteria"/>
</dbReference>
<dbReference type="HOGENOM" id="CLU_013386_1_0_7"/>
<dbReference type="UniPathway" id="UPA00664"/>
<dbReference type="Proteomes" id="UP000008080">
    <property type="component" value="Chromosome"/>
</dbReference>
<dbReference type="GO" id="GO:0005886">
    <property type="term" value="C:plasma membrane"/>
    <property type="evidence" value="ECO:0007669"/>
    <property type="project" value="UniProtKB-SubCell"/>
</dbReference>
<dbReference type="GO" id="GO:0008961">
    <property type="term" value="F:phosphatidylglycerol-prolipoprotein diacylglyceryl transferase activity"/>
    <property type="evidence" value="ECO:0007669"/>
    <property type="project" value="UniProtKB-UniRule"/>
</dbReference>
<dbReference type="GO" id="GO:0042158">
    <property type="term" value="P:lipoprotein biosynthetic process"/>
    <property type="evidence" value="ECO:0007669"/>
    <property type="project" value="UniProtKB-UniRule"/>
</dbReference>
<dbReference type="HAMAP" id="MF_01147">
    <property type="entry name" value="Lgt"/>
    <property type="match status" value="1"/>
</dbReference>
<dbReference type="InterPro" id="IPR001640">
    <property type="entry name" value="Lgt"/>
</dbReference>
<dbReference type="NCBIfam" id="TIGR00544">
    <property type="entry name" value="lgt"/>
    <property type="match status" value="1"/>
</dbReference>
<dbReference type="PANTHER" id="PTHR30589:SF0">
    <property type="entry name" value="PHOSPHATIDYLGLYCEROL--PROLIPOPROTEIN DIACYLGLYCERYL TRANSFERASE"/>
    <property type="match status" value="1"/>
</dbReference>
<dbReference type="PANTHER" id="PTHR30589">
    <property type="entry name" value="PROLIPOPROTEIN DIACYLGLYCERYL TRANSFERASE"/>
    <property type="match status" value="1"/>
</dbReference>
<dbReference type="Pfam" id="PF01790">
    <property type="entry name" value="LGT"/>
    <property type="match status" value="1"/>
</dbReference>
<dbReference type="PROSITE" id="PS01311">
    <property type="entry name" value="LGT"/>
    <property type="match status" value="1"/>
</dbReference>
<protein>
    <recommendedName>
        <fullName evidence="1">Phosphatidylglycerol--prolipoprotein diacylglyceryl transferase</fullName>
        <ecNumber evidence="1">2.5.1.145</ecNumber>
    </recommendedName>
</protein>
<organism>
    <name type="scientific">Bdellovibrio bacteriovorus (strain ATCC 15356 / DSM 50701 / NCIMB 9529 / HD100)</name>
    <dbReference type="NCBI Taxonomy" id="264462"/>
    <lineage>
        <taxon>Bacteria</taxon>
        <taxon>Pseudomonadati</taxon>
        <taxon>Bdellovibrionota</taxon>
        <taxon>Bdellovibrionia</taxon>
        <taxon>Bdellovibrionales</taxon>
        <taxon>Pseudobdellovibrionaceae</taxon>
        <taxon>Bdellovibrio</taxon>
    </lineage>
</organism>